<sequence length="293" mass="32670">MTTLHNLSYGNTPLHNERPEIASSQIVNQTLGQFRGESVQIVSGTLQSIADMAEEVTFVFSERKELSLDKRKLSDSQARVSDVEEQVNQYLSKVPELEQKQNVSELLSLLSNSPNISLSQLKAYLEGKSEEPSEQFKMLCGLRDALKGRPELAHLSHLVEQALVSMAEEQGETIVLGARITPEAYRESQSGVNPLQPLRDTYRDAVMGYQGIYAIWSDLQKRFPNGDIDSVILFLQKALSADLQSQQSGSGREKLGIVISDLQKLKEFGSVSDQVKGFWQFFSEGKTNGVRPF</sequence>
<accession>P68640</accession>
<accession>P16160</accession>
<dbReference type="EMBL" id="AF074612">
    <property type="protein sequence ID" value="AAC69792.1"/>
    <property type="molecule type" value="Genomic_DNA"/>
</dbReference>
<dbReference type="EMBL" id="AF053946">
    <property type="protein sequence ID" value="AAC62565.1"/>
    <property type="molecule type" value="Genomic_DNA"/>
</dbReference>
<dbReference type="EMBL" id="AL117189">
    <property type="protein sequence ID" value="CAB54916.1"/>
    <property type="molecule type" value="Genomic_DNA"/>
</dbReference>
<dbReference type="EMBL" id="AE017043">
    <property type="protein sequence ID" value="AAS58563.1"/>
    <property type="molecule type" value="Genomic_DNA"/>
</dbReference>
<dbReference type="PIR" id="T43586">
    <property type="entry name" value="T43586"/>
</dbReference>
<dbReference type="RefSeq" id="NP_395173.1">
    <property type="nucleotide sequence ID" value="NC_003131.1"/>
</dbReference>
<dbReference type="RefSeq" id="NP_857743.1">
    <property type="nucleotide sequence ID" value="NC_004836.1"/>
</dbReference>
<dbReference type="RefSeq" id="NP_857938.1">
    <property type="nucleotide sequence ID" value="NC_004839.1"/>
</dbReference>
<dbReference type="RefSeq" id="WP_002212958.1">
    <property type="nucleotide sequence ID" value="NZ_WUCM01000070.1"/>
</dbReference>
<dbReference type="PDB" id="1XKP">
    <property type="method" value="X-ray"/>
    <property type="resolution" value="1.70 A"/>
    <property type="chains" value="A=33-277"/>
</dbReference>
<dbReference type="PDB" id="1XL3">
    <property type="method" value="X-ray"/>
    <property type="resolution" value="2.20 A"/>
    <property type="chains" value="A/B=76-293"/>
</dbReference>
<dbReference type="PDBsum" id="1XKP"/>
<dbReference type="PDBsum" id="1XL3"/>
<dbReference type="SMR" id="P68640"/>
<dbReference type="IntAct" id="P68640">
    <property type="interactions" value="6"/>
</dbReference>
<dbReference type="MINT" id="P68640"/>
<dbReference type="PaxDb" id="214092-5832459"/>
<dbReference type="DNASU" id="1149302"/>
<dbReference type="EnsemblBacteria" id="AAS58563">
    <property type="protein sequence ID" value="AAS58563"/>
    <property type="gene ID" value="YP_pCD44"/>
</dbReference>
<dbReference type="KEGG" id="ype:YPCD1.39c"/>
<dbReference type="KEGG" id="ypm:YP_pCD44"/>
<dbReference type="PATRIC" id="fig|214092.21.peg.50"/>
<dbReference type="eggNOG" id="ENOG5032VH1">
    <property type="taxonomic scope" value="Bacteria"/>
</dbReference>
<dbReference type="HOGENOM" id="CLU_061811_0_0_6"/>
<dbReference type="OMA" id="RVHNATQ"/>
<dbReference type="OrthoDB" id="5810262at2"/>
<dbReference type="EvolutionaryTrace" id="P68640"/>
<dbReference type="Proteomes" id="UP000000815">
    <property type="component" value="Plasmid pCD1"/>
</dbReference>
<dbReference type="Proteomes" id="UP000001019">
    <property type="component" value="Plasmid pCD1"/>
</dbReference>
<dbReference type="GO" id="GO:0009279">
    <property type="term" value="C:cell outer membrane"/>
    <property type="evidence" value="ECO:0007669"/>
    <property type="project" value="UniProtKB-SubCell"/>
</dbReference>
<dbReference type="GO" id="GO:0009986">
    <property type="term" value="C:cell surface"/>
    <property type="evidence" value="ECO:0007669"/>
    <property type="project" value="InterPro"/>
</dbReference>
<dbReference type="GO" id="GO:0050709">
    <property type="term" value="P:negative regulation of protein secretion"/>
    <property type="evidence" value="ECO:0007669"/>
    <property type="project" value="InterPro"/>
</dbReference>
<dbReference type="GO" id="GO:0030254">
    <property type="term" value="P:protein secretion by the type III secretion system"/>
    <property type="evidence" value="ECO:0007669"/>
    <property type="project" value="InterPro"/>
</dbReference>
<dbReference type="Gene3D" id="1.10.150.630">
    <property type="match status" value="1"/>
</dbReference>
<dbReference type="Gene3D" id="6.10.250.670">
    <property type="match status" value="1"/>
</dbReference>
<dbReference type="InterPro" id="IPR010812">
    <property type="entry name" value="HrpJ-like"/>
</dbReference>
<dbReference type="InterPro" id="IPR013401">
    <property type="entry name" value="T3SS_LcrE"/>
</dbReference>
<dbReference type="NCBIfam" id="TIGR02568">
    <property type="entry name" value="LcrE"/>
    <property type="match status" value="1"/>
</dbReference>
<dbReference type="Pfam" id="PF07201">
    <property type="entry name" value="HrpJ"/>
    <property type="match status" value="1"/>
</dbReference>
<dbReference type="SUPFAM" id="SSF140591">
    <property type="entry name" value="Type III secretion system domain"/>
    <property type="match status" value="1"/>
</dbReference>
<organism>
    <name type="scientific">Yersinia pestis</name>
    <dbReference type="NCBI Taxonomy" id="632"/>
    <lineage>
        <taxon>Bacteria</taxon>
        <taxon>Pseudomonadati</taxon>
        <taxon>Pseudomonadota</taxon>
        <taxon>Gammaproteobacteria</taxon>
        <taxon>Enterobacterales</taxon>
        <taxon>Yersiniaceae</taxon>
        <taxon>Yersinia</taxon>
    </lineage>
</organism>
<reference key="1">
    <citation type="journal article" date="1998" name="Infect. Immun.">
        <title>DNA sequencing and analysis of the low-Ca2+-response plasmid pCD1 of Yersinia pestis KIM5.</title>
        <authorList>
            <person name="Perry R.D."/>
            <person name="Straley S.C."/>
            <person name="Fetherston J.D."/>
            <person name="Rose D.J."/>
            <person name="Gregor J."/>
            <person name="Blattner F.R."/>
        </authorList>
    </citation>
    <scope>NUCLEOTIDE SEQUENCE [GENOMIC DNA]</scope>
    <source>
        <strain>KIM5 / Biovar Mediaevalis</strain>
    </source>
</reference>
<reference key="2">
    <citation type="journal article" date="1998" name="J. Bacteriol.">
        <title>Structural organization of virulence-associated plasmids of Yersinia pestis.</title>
        <authorList>
            <person name="Hu P."/>
            <person name="Elliott J."/>
            <person name="McCready P."/>
            <person name="Skowronski E."/>
            <person name="Garnes J."/>
            <person name="Kobayashi A."/>
            <person name="Brubaker R.R."/>
            <person name="Garcia E."/>
        </authorList>
    </citation>
    <scope>NUCLEOTIDE SEQUENCE [GENOMIC DNA]</scope>
    <source>
        <strain>KIM5 / Biovar Mediaevalis</strain>
    </source>
</reference>
<reference key="3">
    <citation type="journal article" date="2001" name="Nature">
        <title>Genome sequence of Yersinia pestis, the causative agent of plague.</title>
        <authorList>
            <person name="Parkhill J."/>
            <person name="Wren B.W."/>
            <person name="Thomson N.R."/>
            <person name="Titball R.W."/>
            <person name="Holden M.T.G."/>
            <person name="Prentice M.B."/>
            <person name="Sebaihia M."/>
            <person name="James K.D."/>
            <person name="Churcher C.M."/>
            <person name="Mungall K.L."/>
            <person name="Baker S."/>
            <person name="Basham D."/>
            <person name="Bentley S.D."/>
            <person name="Brooks K."/>
            <person name="Cerdeno-Tarraga A.-M."/>
            <person name="Chillingworth T."/>
            <person name="Cronin A."/>
            <person name="Davies R.M."/>
            <person name="Davis P."/>
            <person name="Dougan G."/>
            <person name="Feltwell T."/>
            <person name="Hamlin N."/>
            <person name="Holroyd S."/>
            <person name="Jagels K."/>
            <person name="Karlyshev A.V."/>
            <person name="Leather S."/>
            <person name="Moule S."/>
            <person name="Oyston P.C.F."/>
            <person name="Quail M.A."/>
            <person name="Rutherford K.M."/>
            <person name="Simmonds M."/>
            <person name="Skelton J."/>
            <person name="Stevens K."/>
            <person name="Whitehead S."/>
            <person name="Barrell B.G."/>
        </authorList>
    </citation>
    <scope>NUCLEOTIDE SEQUENCE [LARGE SCALE GENOMIC DNA]</scope>
    <source>
        <strain>CO-92 / Biovar Orientalis</strain>
    </source>
</reference>
<reference key="4">
    <citation type="journal article" date="2004" name="DNA Res.">
        <title>Complete genome sequence of Yersinia pestis strain 91001, an isolate avirulent to humans.</title>
        <authorList>
            <person name="Song Y."/>
            <person name="Tong Z."/>
            <person name="Wang J."/>
            <person name="Wang L."/>
            <person name="Guo Z."/>
            <person name="Han Y."/>
            <person name="Zhang J."/>
            <person name="Pei D."/>
            <person name="Zhou D."/>
            <person name="Qin H."/>
            <person name="Pang X."/>
            <person name="Han Y."/>
            <person name="Zhai J."/>
            <person name="Li M."/>
            <person name="Cui B."/>
            <person name="Qi Z."/>
            <person name="Jin L."/>
            <person name="Dai R."/>
            <person name="Chen F."/>
            <person name="Li S."/>
            <person name="Ye C."/>
            <person name="Du Z."/>
            <person name="Lin W."/>
            <person name="Wang J."/>
            <person name="Yu J."/>
            <person name="Yang H."/>
            <person name="Wang J."/>
            <person name="Huang P."/>
            <person name="Yang R."/>
        </authorList>
    </citation>
    <scope>NUCLEOTIDE SEQUENCE [LARGE SCALE GENOMIC DNA]</scope>
    <source>
        <strain>91001 / Biovar Mediaevalis</strain>
    </source>
</reference>
<geneLocation type="plasmid">
    <name>pCD1</name>
</geneLocation>
<comment type="function">
    <text evidence="1">Plays a major role in regulation of the low-calcium response. Seems to sense the calcium concentration and to transmit a signal to shut off yop transcription when the calcium concentration is high (By similarity).</text>
</comment>
<comment type="subcellular location">
    <subcellularLocation>
        <location evidence="1">Cell outer membrane</location>
        <topology evidence="1">Peripheral membrane protein</topology>
    </subcellularLocation>
</comment>
<comment type="similarity">
    <text evidence="2">Belongs to the HrpJ/YopN family.</text>
</comment>
<protein>
    <recommendedName>
        <fullName>Outer membrane protein YopN</fullName>
    </recommendedName>
    <alternativeName>
        <fullName>LcrE</fullName>
    </alternativeName>
    <alternativeName>
        <fullName>Yop4b</fullName>
    </alternativeName>
</protein>
<keyword id="KW-0002">3D-structure</keyword>
<keyword id="KW-0106">Calcium</keyword>
<keyword id="KW-0998">Cell outer membrane</keyword>
<keyword id="KW-0472">Membrane</keyword>
<keyword id="KW-0614">Plasmid</keyword>
<keyword id="KW-1185">Reference proteome</keyword>
<keyword id="KW-0843">Virulence</keyword>
<evidence type="ECO:0000250" key="1"/>
<evidence type="ECO:0000305" key="2"/>
<evidence type="ECO:0007829" key="3">
    <source>
        <dbReference type="PDB" id="1XKP"/>
    </source>
</evidence>
<evidence type="ECO:0007829" key="4">
    <source>
        <dbReference type="PDB" id="1XL3"/>
    </source>
</evidence>
<gene>
    <name type="primary">yopN</name>
    <name type="synonym">lcrE</name>
    <name type="ordered locus">YPCD1.39c</name>
    <name type="ordered locus">y5039</name>
    <name type="ordered locus">y0042</name>
    <name type="ordered locus">YP_pCD44</name>
</gene>
<proteinExistence type="evidence at protein level"/>
<name>YOPN_YERPE</name>
<feature type="initiator methionine" description="Removed" evidence="1">
    <location>
        <position position="1"/>
    </location>
</feature>
<feature type="chain" id="PRO_0000066371" description="Outer membrane protein YopN">
    <location>
        <begin position="2"/>
        <end position="293"/>
    </location>
</feature>
<feature type="sequence conflict" description="In Ref. 4; AAS58563." evidence="2" ref="4">
    <original>L</original>
    <variation>F</variation>
    <location>
        <position position="66"/>
    </location>
</feature>
<feature type="strand" evidence="3">
    <location>
        <begin position="39"/>
        <end position="42"/>
    </location>
</feature>
<feature type="helix" evidence="3">
    <location>
        <begin position="49"/>
        <end position="56"/>
    </location>
</feature>
<feature type="strand" evidence="3">
    <location>
        <begin position="73"/>
        <end position="75"/>
    </location>
</feature>
<feature type="helix" evidence="3">
    <location>
        <begin position="76"/>
        <end position="91"/>
    </location>
</feature>
<feature type="helix" evidence="3">
    <location>
        <begin position="102"/>
        <end position="110"/>
    </location>
</feature>
<feature type="helix" evidence="3">
    <location>
        <begin position="118"/>
        <end position="121"/>
    </location>
</feature>
<feature type="helix" evidence="3">
    <location>
        <begin position="124"/>
        <end position="127"/>
    </location>
</feature>
<feature type="helix" evidence="3">
    <location>
        <begin position="132"/>
        <end position="136"/>
    </location>
</feature>
<feature type="helix" evidence="3">
    <location>
        <begin position="139"/>
        <end position="146"/>
    </location>
</feature>
<feature type="helix" evidence="3">
    <location>
        <begin position="150"/>
        <end position="152"/>
    </location>
</feature>
<feature type="helix" evidence="3">
    <location>
        <begin position="153"/>
        <end position="188"/>
    </location>
</feature>
<feature type="strand" evidence="4">
    <location>
        <begin position="191"/>
        <end position="193"/>
    </location>
</feature>
<feature type="helix" evidence="3">
    <location>
        <begin position="195"/>
        <end position="207"/>
    </location>
</feature>
<feature type="helix" evidence="3">
    <location>
        <begin position="212"/>
        <end position="220"/>
    </location>
</feature>
<feature type="helix" evidence="3">
    <location>
        <begin position="228"/>
        <end position="236"/>
    </location>
</feature>
<feature type="helix" evidence="3">
    <location>
        <begin position="239"/>
        <end position="245"/>
    </location>
</feature>
<feature type="helix" evidence="3">
    <location>
        <begin position="250"/>
        <end position="253"/>
    </location>
</feature>
<feature type="helix" evidence="3">
    <location>
        <begin position="256"/>
        <end position="263"/>
    </location>
</feature>
<feature type="helix" evidence="4">
    <location>
        <begin position="272"/>
        <end position="275"/>
    </location>
</feature>
<feature type="helix" evidence="4">
    <location>
        <begin position="278"/>
        <end position="282"/>
    </location>
</feature>